<feature type="chain" id="PRO_0000374785" description="Ribosomal protein uS12 methylthiotransferase RimO">
    <location>
        <begin position="1"/>
        <end position="444"/>
    </location>
</feature>
<feature type="domain" description="MTTase N-terminal" evidence="1">
    <location>
        <begin position="4"/>
        <end position="118"/>
    </location>
</feature>
<feature type="domain" description="Radical SAM core" evidence="2">
    <location>
        <begin position="141"/>
        <end position="371"/>
    </location>
</feature>
<feature type="domain" description="TRAM" evidence="1">
    <location>
        <begin position="374"/>
        <end position="440"/>
    </location>
</feature>
<feature type="binding site" evidence="1">
    <location>
        <position position="13"/>
    </location>
    <ligand>
        <name>[4Fe-4S] cluster</name>
        <dbReference type="ChEBI" id="CHEBI:49883"/>
        <label>1</label>
    </ligand>
</feature>
<feature type="binding site" evidence="1">
    <location>
        <position position="48"/>
    </location>
    <ligand>
        <name>[4Fe-4S] cluster</name>
        <dbReference type="ChEBI" id="CHEBI:49883"/>
        <label>1</label>
    </ligand>
</feature>
<feature type="binding site" evidence="1">
    <location>
        <position position="81"/>
    </location>
    <ligand>
        <name>[4Fe-4S] cluster</name>
        <dbReference type="ChEBI" id="CHEBI:49883"/>
        <label>1</label>
    </ligand>
</feature>
<feature type="binding site" evidence="1">
    <location>
        <position position="155"/>
    </location>
    <ligand>
        <name>[4Fe-4S] cluster</name>
        <dbReference type="ChEBI" id="CHEBI:49883"/>
        <label>2</label>
        <note>4Fe-4S-S-AdoMet</note>
    </ligand>
</feature>
<feature type="binding site" evidence="1">
    <location>
        <position position="159"/>
    </location>
    <ligand>
        <name>[4Fe-4S] cluster</name>
        <dbReference type="ChEBI" id="CHEBI:49883"/>
        <label>2</label>
        <note>4Fe-4S-S-AdoMet</note>
    </ligand>
</feature>
<feature type="binding site" evidence="1">
    <location>
        <position position="162"/>
    </location>
    <ligand>
        <name>[4Fe-4S] cluster</name>
        <dbReference type="ChEBI" id="CHEBI:49883"/>
        <label>2</label>
        <note>4Fe-4S-S-AdoMet</note>
    </ligand>
</feature>
<reference key="1">
    <citation type="journal article" date="2006" name="Nat. Biotechnol.">
        <title>The genome and transcriptomes of the anti-tumor agent Clostridium novyi-NT.</title>
        <authorList>
            <person name="Bettegowda C."/>
            <person name="Huang X."/>
            <person name="Lin J."/>
            <person name="Cheong I."/>
            <person name="Kohli M."/>
            <person name="Szabo S.A."/>
            <person name="Zhang X."/>
            <person name="Diaz L.A. Jr."/>
            <person name="Velculescu V.E."/>
            <person name="Parmigiani G."/>
            <person name="Kinzler K.W."/>
            <person name="Vogelstein B."/>
            <person name="Zhou S."/>
        </authorList>
    </citation>
    <scope>NUCLEOTIDE SEQUENCE [LARGE SCALE GENOMIC DNA]</scope>
    <source>
        <strain>NT</strain>
    </source>
</reference>
<proteinExistence type="inferred from homology"/>
<accession>A0Q0P6</accession>
<name>RIMO_CLONN</name>
<comment type="function">
    <text evidence="1">Catalyzes the methylthiolation of an aspartic acid residue of ribosomal protein uS12.</text>
</comment>
<comment type="catalytic activity">
    <reaction evidence="1">
        <text>L-aspartate(89)-[ribosomal protein uS12]-hydrogen + (sulfur carrier)-SH + AH2 + 2 S-adenosyl-L-methionine = 3-methylsulfanyl-L-aspartate(89)-[ribosomal protein uS12]-hydrogen + (sulfur carrier)-H + 5'-deoxyadenosine + L-methionine + A + S-adenosyl-L-homocysteine + 2 H(+)</text>
        <dbReference type="Rhea" id="RHEA:37087"/>
        <dbReference type="Rhea" id="RHEA-COMP:10460"/>
        <dbReference type="Rhea" id="RHEA-COMP:10461"/>
        <dbReference type="Rhea" id="RHEA-COMP:14737"/>
        <dbReference type="Rhea" id="RHEA-COMP:14739"/>
        <dbReference type="ChEBI" id="CHEBI:13193"/>
        <dbReference type="ChEBI" id="CHEBI:15378"/>
        <dbReference type="ChEBI" id="CHEBI:17319"/>
        <dbReference type="ChEBI" id="CHEBI:17499"/>
        <dbReference type="ChEBI" id="CHEBI:29917"/>
        <dbReference type="ChEBI" id="CHEBI:29961"/>
        <dbReference type="ChEBI" id="CHEBI:57844"/>
        <dbReference type="ChEBI" id="CHEBI:57856"/>
        <dbReference type="ChEBI" id="CHEBI:59789"/>
        <dbReference type="ChEBI" id="CHEBI:64428"/>
        <dbReference type="ChEBI" id="CHEBI:73599"/>
        <dbReference type="EC" id="2.8.4.4"/>
    </reaction>
</comment>
<comment type="cofactor">
    <cofactor evidence="1">
        <name>[4Fe-4S] cluster</name>
        <dbReference type="ChEBI" id="CHEBI:49883"/>
    </cofactor>
    <text evidence="1">Binds 2 [4Fe-4S] clusters. One cluster is coordinated with 3 cysteines and an exchangeable S-adenosyl-L-methionine.</text>
</comment>
<comment type="subcellular location">
    <subcellularLocation>
        <location evidence="1">Cytoplasm</location>
    </subcellularLocation>
</comment>
<comment type="similarity">
    <text evidence="1">Belongs to the methylthiotransferase family. RimO subfamily.</text>
</comment>
<evidence type="ECO:0000255" key="1">
    <source>
        <dbReference type="HAMAP-Rule" id="MF_01865"/>
    </source>
</evidence>
<evidence type="ECO:0000255" key="2">
    <source>
        <dbReference type="PROSITE-ProRule" id="PRU01266"/>
    </source>
</evidence>
<protein>
    <recommendedName>
        <fullName evidence="1">Ribosomal protein uS12 methylthiotransferase RimO</fullName>
        <shortName evidence="1">uS12 MTTase</shortName>
        <shortName evidence="1">uS12 methylthiotransferase</shortName>
        <ecNumber evidence="1">2.8.4.4</ecNumber>
    </recommendedName>
    <alternativeName>
        <fullName evidence="1">Ribosomal protein uS12 (aspartate-C(3))-methylthiotransferase</fullName>
    </alternativeName>
    <alternativeName>
        <fullName evidence="1">Ribosome maturation factor RimO</fullName>
    </alternativeName>
</protein>
<keyword id="KW-0004">4Fe-4S</keyword>
<keyword id="KW-0963">Cytoplasm</keyword>
<keyword id="KW-0408">Iron</keyword>
<keyword id="KW-0411">Iron-sulfur</keyword>
<keyword id="KW-0479">Metal-binding</keyword>
<keyword id="KW-1185">Reference proteome</keyword>
<keyword id="KW-0949">S-adenosyl-L-methionine</keyword>
<keyword id="KW-0808">Transferase</keyword>
<organism>
    <name type="scientific">Clostridium novyi (strain NT)</name>
    <dbReference type="NCBI Taxonomy" id="386415"/>
    <lineage>
        <taxon>Bacteria</taxon>
        <taxon>Bacillati</taxon>
        <taxon>Bacillota</taxon>
        <taxon>Clostridia</taxon>
        <taxon>Eubacteriales</taxon>
        <taxon>Clostridiaceae</taxon>
        <taxon>Clostridium</taxon>
    </lineage>
</organism>
<gene>
    <name evidence="1" type="primary">rimO</name>
    <name type="ordered locus">NT01CX_2125</name>
</gene>
<sequence>MNRYKIGLISLGCDKNRIDSELLLGKLNEKNDIVNDPNKADIIIVNTCGFIESSKQESIDTILEMAKYKEENCKMIIATGCLTQRYSKELLELIPEIDIMLGVNDYANIQNYIDDFFNEHNKICQCKYSDISINEGKRILTTAKHMAYIRISEGCNNLCTYCIIPKIRGKYRSRSIESIINEAKELANMGVKELILVGQDTAIYGSDLYKENRLSQLLRELSNIEDIEWIRILYTYPEEITDELIEEIKNNDKVCKYLDIPIQHISNTVLKRMNRKSSKELITDNIKKMRKEIDGLCLRTSIIVGFPGETEDEFNELKEFVEEIKFDNLGVFKYSQEEDTAAARMKDQVSEDLKEERLATIMSIQQNVSSKINKNKLEKVYKVLVEGQNDKYYIGRNYQMVPEIDGAIFFKCDKILNVGEFVYVKITDTLEYDLIGVVCDESGQ</sequence>
<dbReference type="EC" id="2.8.4.4" evidence="1"/>
<dbReference type="EMBL" id="CP000382">
    <property type="protein sequence ID" value="ABK61456.1"/>
    <property type="molecule type" value="Genomic_DNA"/>
</dbReference>
<dbReference type="RefSeq" id="WP_011722198.1">
    <property type="nucleotide sequence ID" value="NC_008593.1"/>
</dbReference>
<dbReference type="SMR" id="A0Q0P6"/>
<dbReference type="STRING" id="386415.NT01CX_2125"/>
<dbReference type="KEGG" id="cno:NT01CX_2125"/>
<dbReference type="PATRIC" id="fig|386415.7.peg.1230"/>
<dbReference type="eggNOG" id="COG0621">
    <property type="taxonomic scope" value="Bacteria"/>
</dbReference>
<dbReference type="HOGENOM" id="CLU_018697_0_1_9"/>
<dbReference type="Proteomes" id="UP000008220">
    <property type="component" value="Chromosome"/>
</dbReference>
<dbReference type="GO" id="GO:0005829">
    <property type="term" value="C:cytosol"/>
    <property type="evidence" value="ECO:0007669"/>
    <property type="project" value="TreeGrafter"/>
</dbReference>
<dbReference type="GO" id="GO:0051539">
    <property type="term" value="F:4 iron, 4 sulfur cluster binding"/>
    <property type="evidence" value="ECO:0007669"/>
    <property type="project" value="UniProtKB-UniRule"/>
</dbReference>
<dbReference type="GO" id="GO:0035599">
    <property type="term" value="F:aspartic acid methylthiotransferase activity"/>
    <property type="evidence" value="ECO:0007669"/>
    <property type="project" value="TreeGrafter"/>
</dbReference>
<dbReference type="GO" id="GO:0046872">
    <property type="term" value="F:metal ion binding"/>
    <property type="evidence" value="ECO:0007669"/>
    <property type="project" value="UniProtKB-KW"/>
</dbReference>
<dbReference type="GO" id="GO:0103039">
    <property type="term" value="F:protein methylthiotransferase activity"/>
    <property type="evidence" value="ECO:0007669"/>
    <property type="project" value="UniProtKB-EC"/>
</dbReference>
<dbReference type="GO" id="GO:0006400">
    <property type="term" value="P:tRNA modification"/>
    <property type="evidence" value="ECO:0007669"/>
    <property type="project" value="InterPro"/>
</dbReference>
<dbReference type="CDD" id="cd01335">
    <property type="entry name" value="Radical_SAM"/>
    <property type="match status" value="1"/>
</dbReference>
<dbReference type="FunFam" id="3.80.30.20:FF:000001">
    <property type="entry name" value="tRNA-2-methylthio-N(6)-dimethylallyladenosine synthase 2"/>
    <property type="match status" value="1"/>
</dbReference>
<dbReference type="Gene3D" id="3.40.50.12160">
    <property type="entry name" value="Methylthiotransferase, N-terminal domain"/>
    <property type="match status" value="1"/>
</dbReference>
<dbReference type="Gene3D" id="2.40.50.140">
    <property type="entry name" value="Nucleic acid-binding proteins"/>
    <property type="match status" value="1"/>
</dbReference>
<dbReference type="Gene3D" id="3.80.30.20">
    <property type="entry name" value="tm_1862 like domain"/>
    <property type="match status" value="1"/>
</dbReference>
<dbReference type="HAMAP" id="MF_01865">
    <property type="entry name" value="MTTase_RimO"/>
    <property type="match status" value="1"/>
</dbReference>
<dbReference type="InterPro" id="IPR006638">
    <property type="entry name" value="Elp3/MiaA/NifB-like_rSAM"/>
</dbReference>
<dbReference type="InterPro" id="IPR005839">
    <property type="entry name" value="Methylthiotransferase"/>
</dbReference>
<dbReference type="InterPro" id="IPR020612">
    <property type="entry name" value="Methylthiotransferase_CS"/>
</dbReference>
<dbReference type="InterPro" id="IPR013848">
    <property type="entry name" value="Methylthiotransferase_N"/>
</dbReference>
<dbReference type="InterPro" id="IPR038135">
    <property type="entry name" value="Methylthiotransferase_N_sf"/>
</dbReference>
<dbReference type="InterPro" id="IPR012340">
    <property type="entry name" value="NA-bd_OB-fold"/>
</dbReference>
<dbReference type="InterPro" id="IPR005840">
    <property type="entry name" value="Ribosomal_uS12_MeSTrfase_RimO"/>
</dbReference>
<dbReference type="InterPro" id="IPR007197">
    <property type="entry name" value="rSAM"/>
</dbReference>
<dbReference type="InterPro" id="IPR023404">
    <property type="entry name" value="rSAM_horseshoe"/>
</dbReference>
<dbReference type="InterPro" id="IPR002792">
    <property type="entry name" value="TRAM_dom"/>
</dbReference>
<dbReference type="NCBIfam" id="TIGR01125">
    <property type="entry name" value="30S ribosomal protein S12 methylthiotransferase RimO"/>
    <property type="match status" value="1"/>
</dbReference>
<dbReference type="NCBIfam" id="TIGR00089">
    <property type="entry name" value="MiaB/RimO family radical SAM methylthiotransferase"/>
    <property type="match status" value="1"/>
</dbReference>
<dbReference type="PANTHER" id="PTHR43837">
    <property type="entry name" value="RIBOSOMAL PROTEIN S12 METHYLTHIOTRANSFERASE RIMO"/>
    <property type="match status" value="1"/>
</dbReference>
<dbReference type="PANTHER" id="PTHR43837:SF1">
    <property type="entry name" value="RIBOSOMAL PROTEIN US12 METHYLTHIOTRANSFERASE RIMO"/>
    <property type="match status" value="1"/>
</dbReference>
<dbReference type="Pfam" id="PF04055">
    <property type="entry name" value="Radical_SAM"/>
    <property type="match status" value="1"/>
</dbReference>
<dbReference type="Pfam" id="PF18693">
    <property type="entry name" value="TRAM_2"/>
    <property type="match status" value="1"/>
</dbReference>
<dbReference type="Pfam" id="PF00919">
    <property type="entry name" value="UPF0004"/>
    <property type="match status" value="1"/>
</dbReference>
<dbReference type="SFLD" id="SFLDG01082">
    <property type="entry name" value="B12-binding_domain_containing"/>
    <property type="match status" value="1"/>
</dbReference>
<dbReference type="SFLD" id="SFLDS00029">
    <property type="entry name" value="Radical_SAM"/>
    <property type="match status" value="1"/>
</dbReference>
<dbReference type="SFLD" id="SFLDF00274">
    <property type="entry name" value="ribosomal_protein_S12_methylth"/>
    <property type="match status" value="1"/>
</dbReference>
<dbReference type="SMART" id="SM00729">
    <property type="entry name" value="Elp3"/>
    <property type="match status" value="1"/>
</dbReference>
<dbReference type="SUPFAM" id="SSF102114">
    <property type="entry name" value="Radical SAM enzymes"/>
    <property type="match status" value="1"/>
</dbReference>
<dbReference type="PROSITE" id="PS51449">
    <property type="entry name" value="MTTASE_N"/>
    <property type="match status" value="1"/>
</dbReference>
<dbReference type="PROSITE" id="PS01278">
    <property type="entry name" value="MTTASE_RADICAL"/>
    <property type="match status" value="1"/>
</dbReference>
<dbReference type="PROSITE" id="PS51918">
    <property type="entry name" value="RADICAL_SAM"/>
    <property type="match status" value="1"/>
</dbReference>
<dbReference type="PROSITE" id="PS50926">
    <property type="entry name" value="TRAM"/>
    <property type="match status" value="1"/>
</dbReference>